<feature type="chain" id="PRO_0000304488" description="2-dehydro-3-deoxyphosphooctonate aldolase">
    <location>
        <begin position="1"/>
        <end position="282"/>
    </location>
</feature>
<gene>
    <name evidence="1" type="primary">kdsA</name>
    <name type="ordered locus">Shewmr4_3163</name>
</gene>
<comment type="catalytic activity">
    <reaction evidence="1">
        <text>D-arabinose 5-phosphate + phosphoenolpyruvate + H2O = 3-deoxy-alpha-D-manno-2-octulosonate-8-phosphate + phosphate</text>
        <dbReference type="Rhea" id="RHEA:14053"/>
        <dbReference type="ChEBI" id="CHEBI:15377"/>
        <dbReference type="ChEBI" id="CHEBI:43474"/>
        <dbReference type="ChEBI" id="CHEBI:57693"/>
        <dbReference type="ChEBI" id="CHEBI:58702"/>
        <dbReference type="ChEBI" id="CHEBI:85985"/>
        <dbReference type="EC" id="2.5.1.55"/>
    </reaction>
</comment>
<comment type="pathway">
    <text evidence="1">Carbohydrate biosynthesis; 3-deoxy-D-manno-octulosonate biosynthesis; 3-deoxy-D-manno-octulosonate from D-ribulose 5-phosphate: step 2/3.</text>
</comment>
<comment type="pathway">
    <text evidence="1">Bacterial outer membrane biogenesis; lipopolysaccharide biosynthesis.</text>
</comment>
<comment type="subcellular location">
    <subcellularLocation>
        <location evidence="1">Cytoplasm</location>
    </subcellularLocation>
</comment>
<comment type="similarity">
    <text evidence="1">Belongs to the KdsA family.</text>
</comment>
<name>KDSA_SHESM</name>
<accession>Q0HFD4</accession>
<proteinExistence type="inferred from homology"/>
<keyword id="KW-0963">Cytoplasm</keyword>
<keyword id="KW-0448">Lipopolysaccharide biosynthesis</keyword>
<keyword id="KW-0808">Transferase</keyword>
<sequence length="282" mass="30919">MSNKIINLGSIEIANDKPFVLFGGMNVLESRDLAMSIAETYAEVTQKLGIPYVFKASFDKANRSSVNSYRGPGMEEGLKIFEEIKKTFNLPLITDVHEPYQCAPVAEVVDIIQLPAFLARQTDLVVAMAKTGAIINVKKPQFLAPHEMRHIITKFNEAGNDEIILCERGSCFGYNNLVVDMLGMDEMKQSGYPVIFDATHALQRPGGRADSAGGRRAQATELARSGMALGLAGLFIEAHPDPDNAKCDGPCALPLHQLENYLKQMKAIDDLVKSFDPIDTSK</sequence>
<protein>
    <recommendedName>
        <fullName evidence="1">2-dehydro-3-deoxyphosphooctonate aldolase</fullName>
        <ecNumber evidence="1">2.5.1.55</ecNumber>
    </recommendedName>
    <alternativeName>
        <fullName evidence="1">3-deoxy-D-manno-octulosonic acid 8-phosphate synthase</fullName>
    </alternativeName>
    <alternativeName>
        <fullName evidence="1">KDO-8-phosphate synthase</fullName>
        <shortName evidence="1">KDO 8-P synthase</shortName>
        <shortName evidence="1">KDOPS</shortName>
    </alternativeName>
    <alternativeName>
        <fullName evidence="1">Phospho-2-dehydro-3-deoxyoctonate aldolase</fullName>
    </alternativeName>
</protein>
<evidence type="ECO:0000255" key="1">
    <source>
        <dbReference type="HAMAP-Rule" id="MF_00056"/>
    </source>
</evidence>
<reference key="1">
    <citation type="submission" date="2006-08" db="EMBL/GenBank/DDBJ databases">
        <title>Complete sequence of Shewanella sp. MR-4.</title>
        <authorList>
            <consortium name="US DOE Joint Genome Institute"/>
            <person name="Copeland A."/>
            <person name="Lucas S."/>
            <person name="Lapidus A."/>
            <person name="Barry K."/>
            <person name="Detter J.C."/>
            <person name="Glavina del Rio T."/>
            <person name="Hammon N."/>
            <person name="Israni S."/>
            <person name="Dalin E."/>
            <person name="Tice H."/>
            <person name="Pitluck S."/>
            <person name="Kiss H."/>
            <person name="Brettin T."/>
            <person name="Bruce D."/>
            <person name="Han C."/>
            <person name="Tapia R."/>
            <person name="Gilna P."/>
            <person name="Schmutz J."/>
            <person name="Larimer F."/>
            <person name="Land M."/>
            <person name="Hauser L."/>
            <person name="Kyrpides N."/>
            <person name="Mikhailova N."/>
            <person name="Nealson K."/>
            <person name="Konstantinidis K."/>
            <person name="Klappenbach J."/>
            <person name="Tiedje J."/>
            <person name="Richardson P."/>
        </authorList>
    </citation>
    <scope>NUCLEOTIDE SEQUENCE [LARGE SCALE GENOMIC DNA]</scope>
    <source>
        <strain>MR-4</strain>
    </source>
</reference>
<organism>
    <name type="scientific">Shewanella sp. (strain MR-4)</name>
    <dbReference type="NCBI Taxonomy" id="60480"/>
    <lineage>
        <taxon>Bacteria</taxon>
        <taxon>Pseudomonadati</taxon>
        <taxon>Pseudomonadota</taxon>
        <taxon>Gammaproteobacteria</taxon>
        <taxon>Alteromonadales</taxon>
        <taxon>Shewanellaceae</taxon>
        <taxon>Shewanella</taxon>
    </lineage>
</organism>
<dbReference type="EC" id="2.5.1.55" evidence="1"/>
<dbReference type="EMBL" id="CP000446">
    <property type="protein sequence ID" value="ABI40233.1"/>
    <property type="molecule type" value="Genomic_DNA"/>
</dbReference>
<dbReference type="RefSeq" id="WP_011623905.1">
    <property type="nucleotide sequence ID" value="NC_008321.1"/>
</dbReference>
<dbReference type="SMR" id="Q0HFD4"/>
<dbReference type="KEGG" id="she:Shewmr4_3163"/>
<dbReference type="HOGENOM" id="CLU_036666_0_0_6"/>
<dbReference type="UniPathway" id="UPA00030"/>
<dbReference type="UniPathway" id="UPA00357">
    <property type="reaction ID" value="UER00474"/>
</dbReference>
<dbReference type="GO" id="GO:0005737">
    <property type="term" value="C:cytoplasm"/>
    <property type="evidence" value="ECO:0007669"/>
    <property type="project" value="UniProtKB-SubCell"/>
</dbReference>
<dbReference type="GO" id="GO:0008676">
    <property type="term" value="F:3-deoxy-8-phosphooctulonate synthase activity"/>
    <property type="evidence" value="ECO:0007669"/>
    <property type="project" value="UniProtKB-UniRule"/>
</dbReference>
<dbReference type="GO" id="GO:0019294">
    <property type="term" value="P:keto-3-deoxy-D-manno-octulosonic acid biosynthetic process"/>
    <property type="evidence" value="ECO:0007669"/>
    <property type="project" value="UniProtKB-UniRule"/>
</dbReference>
<dbReference type="Gene3D" id="3.20.20.70">
    <property type="entry name" value="Aldolase class I"/>
    <property type="match status" value="1"/>
</dbReference>
<dbReference type="HAMAP" id="MF_00056">
    <property type="entry name" value="KDO8P_synth"/>
    <property type="match status" value="1"/>
</dbReference>
<dbReference type="InterPro" id="IPR013785">
    <property type="entry name" value="Aldolase_TIM"/>
</dbReference>
<dbReference type="InterPro" id="IPR006218">
    <property type="entry name" value="DAHP1/KDSA"/>
</dbReference>
<dbReference type="InterPro" id="IPR006269">
    <property type="entry name" value="KDO8P_synthase"/>
</dbReference>
<dbReference type="NCBIfam" id="TIGR01362">
    <property type="entry name" value="KDO8P_synth"/>
    <property type="match status" value="1"/>
</dbReference>
<dbReference type="NCBIfam" id="NF003543">
    <property type="entry name" value="PRK05198.1"/>
    <property type="match status" value="1"/>
</dbReference>
<dbReference type="NCBIfam" id="NF009109">
    <property type="entry name" value="PRK12457.1"/>
    <property type="match status" value="1"/>
</dbReference>
<dbReference type="PANTHER" id="PTHR21057">
    <property type="entry name" value="PHOSPHO-2-DEHYDRO-3-DEOXYHEPTONATE ALDOLASE"/>
    <property type="match status" value="1"/>
</dbReference>
<dbReference type="Pfam" id="PF00793">
    <property type="entry name" value="DAHP_synth_1"/>
    <property type="match status" value="1"/>
</dbReference>
<dbReference type="SUPFAM" id="SSF51569">
    <property type="entry name" value="Aldolase"/>
    <property type="match status" value="1"/>
</dbReference>